<accession>B3E8Z1</accession>
<gene>
    <name evidence="1" type="primary">glgC</name>
    <name type="ordered locus">Glov_1543</name>
</gene>
<protein>
    <recommendedName>
        <fullName evidence="1">Glucose-1-phosphate adenylyltransferase</fullName>
        <ecNumber evidence="1">2.7.7.27</ecNumber>
    </recommendedName>
    <alternativeName>
        <fullName evidence="1">ADP-glucose pyrophosphorylase</fullName>
        <shortName evidence="1">ADPGlc PPase</shortName>
    </alternativeName>
    <alternativeName>
        <fullName evidence="1">ADP-glucose synthase</fullName>
    </alternativeName>
</protein>
<proteinExistence type="inferred from homology"/>
<evidence type="ECO:0000255" key="1">
    <source>
        <dbReference type="HAMAP-Rule" id="MF_00624"/>
    </source>
</evidence>
<name>GLGC_TRIL1</name>
<organism>
    <name type="scientific">Trichlorobacter lovleyi (strain ATCC BAA-1151 / DSM 17278 / SZ)</name>
    <name type="common">Geobacter lovleyi</name>
    <dbReference type="NCBI Taxonomy" id="398767"/>
    <lineage>
        <taxon>Bacteria</taxon>
        <taxon>Pseudomonadati</taxon>
        <taxon>Thermodesulfobacteriota</taxon>
        <taxon>Desulfuromonadia</taxon>
        <taxon>Geobacterales</taxon>
        <taxon>Geobacteraceae</taxon>
        <taxon>Trichlorobacter</taxon>
    </lineage>
</organism>
<dbReference type="EC" id="2.7.7.27" evidence="1"/>
<dbReference type="EMBL" id="CP001089">
    <property type="protein sequence ID" value="ACD95259.1"/>
    <property type="molecule type" value="Genomic_DNA"/>
</dbReference>
<dbReference type="RefSeq" id="WP_012469601.1">
    <property type="nucleotide sequence ID" value="NC_010814.1"/>
</dbReference>
<dbReference type="SMR" id="B3E8Z1"/>
<dbReference type="STRING" id="398767.Glov_1543"/>
<dbReference type="KEGG" id="glo:Glov_1543"/>
<dbReference type="eggNOG" id="COG0448">
    <property type="taxonomic scope" value="Bacteria"/>
</dbReference>
<dbReference type="HOGENOM" id="CLU_029499_14_1_7"/>
<dbReference type="OrthoDB" id="9801810at2"/>
<dbReference type="UniPathway" id="UPA00164"/>
<dbReference type="Proteomes" id="UP000002420">
    <property type="component" value="Chromosome"/>
</dbReference>
<dbReference type="GO" id="GO:0005524">
    <property type="term" value="F:ATP binding"/>
    <property type="evidence" value="ECO:0007669"/>
    <property type="project" value="UniProtKB-KW"/>
</dbReference>
<dbReference type="GO" id="GO:0008878">
    <property type="term" value="F:glucose-1-phosphate adenylyltransferase activity"/>
    <property type="evidence" value="ECO:0007669"/>
    <property type="project" value="UniProtKB-UniRule"/>
</dbReference>
<dbReference type="GO" id="GO:0005978">
    <property type="term" value="P:glycogen biosynthetic process"/>
    <property type="evidence" value="ECO:0007669"/>
    <property type="project" value="UniProtKB-UniRule"/>
</dbReference>
<dbReference type="CDD" id="cd02508">
    <property type="entry name" value="ADP_Glucose_PP"/>
    <property type="match status" value="1"/>
</dbReference>
<dbReference type="CDD" id="cd04651">
    <property type="entry name" value="LbH_G1P_AT_C"/>
    <property type="match status" value="1"/>
</dbReference>
<dbReference type="Gene3D" id="2.160.10.10">
    <property type="entry name" value="Hexapeptide repeat proteins"/>
    <property type="match status" value="1"/>
</dbReference>
<dbReference type="Gene3D" id="3.90.550.10">
    <property type="entry name" value="Spore Coat Polysaccharide Biosynthesis Protein SpsA, Chain A"/>
    <property type="match status" value="1"/>
</dbReference>
<dbReference type="HAMAP" id="MF_00624">
    <property type="entry name" value="GlgC"/>
    <property type="match status" value="1"/>
</dbReference>
<dbReference type="InterPro" id="IPR011831">
    <property type="entry name" value="ADP-Glc_PPase"/>
</dbReference>
<dbReference type="InterPro" id="IPR005836">
    <property type="entry name" value="ADP_Glu_pyroP_CS"/>
</dbReference>
<dbReference type="InterPro" id="IPR023049">
    <property type="entry name" value="GlgC_bac"/>
</dbReference>
<dbReference type="InterPro" id="IPR056818">
    <property type="entry name" value="GlmU/GlgC-like_hexapep"/>
</dbReference>
<dbReference type="InterPro" id="IPR005835">
    <property type="entry name" value="NTP_transferase_dom"/>
</dbReference>
<dbReference type="InterPro" id="IPR029044">
    <property type="entry name" value="Nucleotide-diphossugar_trans"/>
</dbReference>
<dbReference type="InterPro" id="IPR011004">
    <property type="entry name" value="Trimer_LpxA-like_sf"/>
</dbReference>
<dbReference type="NCBIfam" id="TIGR02091">
    <property type="entry name" value="glgC"/>
    <property type="match status" value="1"/>
</dbReference>
<dbReference type="NCBIfam" id="NF001947">
    <property type="entry name" value="PRK00725.1"/>
    <property type="match status" value="1"/>
</dbReference>
<dbReference type="NCBIfam" id="NF002023">
    <property type="entry name" value="PRK00844.1"/>
    <property type="match status" value="1"/>
</dbReference>
<dbReference type="PANTHER" id="PTHR43523:SF2">
    <property type="entry name" value="GLUCOSE-1-PHOSPHATE ADENYLYLTRANSFERASE"/>
    <property type="match status" value="1"/>
</dbReference>
<dbReference type="PANTHER" id="PTHR43523">
    <property type="entry name" value="GLUCOSE-1-PHOSPHATE ADENYLYLTRANSFERASE-RELATED"/>
    <property type="match status" value="1"/>
</dbReference>
<dbReference type="Pfam" id="PF24894">
    <property type="entry name" value="Hexapep_GlmU"/>
    <property type="match status" value="1"/>
</dbReference>
<dbReference type="Pfam" id="PF00483">
    <property type="entry name" value="NTP_transferase"/>
    <property type="match status" value="1"/>
</dbReference>
<dbReference type="SUPFAM" id="SSF53448">
    <property type="entry name" value="Nucleotide-diphospho-sugar transferases"/>
    <property type="match status" value="1"/>
</dbReference>
<dbReference type="SUPFAM" id="SSF51161">
    <property type="entry name" value="Trimeric LpxA-like enzymes"/>
    <property type="match status" value="1"/>
</dbReference>
<dbReference type="PROSITE" id="PS00809">
    <property type="entry name" value="ADP_GLC_PYROPHOSPH_2"/>
    <property type="match status" value="1"/>
</dbReference>
<dbReference type="PROSITE" id="PS00810">
    <property type="entry name" value="ADP_GLC_PYROPHOSPH_3"/>
    <property type="match status" value="1"/>
</dbReference>
<comment type="function">
    <text evidence="1">Involved in the biosynthesis of ADP-glucose, a building block required for the elongation reactions to produce glycogen. Catalyzes the reaction between ATP and alpha-D-glucose 1-phosphate (G1P) to produce pyrophosphate and ADP-Glc.</text>
</comment>
<comment type="catalytic activity">
    <reaction evidence="1">
        <text>alpha-D-glucose 1-phosphate + ATP + H(+) = ADP-alpha-D-glucose + diphosphate</text>
        <dbReference type="Rhea" id="RHEA:12120"/>
        <dbReference type="ChEBI" id="CHEBI:15378"/>
        <dbReference type="ChEBI" id="CHEBI:30616"/>
        <dbReference type="ChEBI" id="CHEBI:33019"/>
        <dbReference type="ChEBI" id="CHEBI:57498"/>
        <dbReference type="ChEBI" id="CHEBI:58601"/>
        <dbReference type="EC" id="2.7.7.27"/>
    </reaction>
</comment>
<comment type="pathway">
    <text evidence="1">Glycan biosynthesis; glycogen biosynthesis.</text>
</comment>
<comment type="subunit">
    <text evidence="1">Homotetramer.</text>
</comment>
<comment type="similarity">
    <text evidence="1">Belongs to the bacterial/plant glucose-1-phosphate adenylyltransferase family.</text>
</comment>
<reference key="1">
    <citation type="submission" date="2008-05" db="EMBL/GenBank/DDBJ databases">
        <title>Complete sequence of chromosome of Geobacter lovleyi SZ.</title>
        <authorList>
            <consortium name="US DOE Joint Genome Institute"/>
            <person name="Lucas S."/>
            <person name="Copeland A."/>
            <person name="Lapidus A."/>
            <person name="Glavina del Rio T."/>
            <person name="Dalin E."/>
            <person name="Tice H."/>
            <person name="Bruce D."/>
            <person name="Goodwin L."/>
            <person name="Pitluck S."/>
            <person name="Chertkov O."/>
            <person name="Meincke L."/>
            <person name="Brettin T."/>
            <person name="Detter J.C."/>
            <person name="Han C."/>
            <person name="Tapia R."/>
            <person name="Kuske C.R."/>
            <person name="Schmutz J."/>
            <person name="Larimer F."/>
            <person name="Land M."/>
            <person name="Hauser L."/>
            <person name="Kyrpides N."/>
            <person name="Mikhailova N."/>
            <person name="Sung Y."/>
            <person name="Fletcher K.E."/>
            <person name="Ritalahti K.M."/>
            <person name="Loeffler F.E."/>
            <person name="Richardson P."/>
        </authorList>
    </citation>
    <scope>NUCLEOTIDE SEQUENCE [LARGE SCALE GENOMIC DNA]</scope>
    <source>
        <strain>ATCC BAA-1151 / DSM 17278 / SZ</strain>
    </source>
</reference>
<sequence>MFDGSNLGRNTIAMVLAGGKGERLMPLTLRRAKPSVTFGGKYKIIDFVLSNLFNSGIRRMYILTQYRAYSLNKHIRESWGKWTGLGEFCVAISPETSSDSEQWFKGTADAILQYLRFVETADADYVAVFGGDHIYKMDVTQMIQFHRMNRADLTIASLEVPKEEASRFGVFSVDDDNRVTAFTEKPKDPETIPGRETCFASMGNYIFPTRKLIEVLLEGKKHYEDLDFGKHVIPMMLEKGDRIYAYNFNDNLVPGMKSEERGYWKDVGTLDSYYEANMDLIHVSPQLNLYNYKWPILTNQGNLPPAKTVFDEEGRRGVNIDSYVTGGCITSGSTVRRSILGPMCKINSYSLVEDSILFEGVTVGRHVKIKKAIIDKGVVIPDGAEIGCNHEDDIKNGYTITESGIVVVPRKDR</sequence>
<keyword id="KW-0067">ATP-binding</keyword>
<keyword id="KW-0119">Carbohydrate metabolism</keyword>
<keyword id="KW-0320">Glycogen biosynthesis</keyword>
<keyword id="KW-0321">Glycogen metabolism</keyword>
<keyword id="KW-0547">Nucleotide-binding</keyword>
<keyword id="KW-0548">Nucleotidyltransferase</keyword>
<keyword id="KW-1185">Reference proteome</keyword>
<keyword id="KW-0808">Transferase</keyword>
<feature type="chain" id="PRO_1000130487" description="Glucose-1-phosphate adenylyltransferase">
    <location>
        <begin position="1"/>
        <end position="413"/>
    </location>
</feature>
<feature type="binding site" evidence="1">
    <location>
        <position position="169"/>
    </location>
    <ligand>
        <name>alpha-D-glucose 1-phosphate</name>
        <dbReference type="ChEBI" id="CHEBI:58601"/>
    </ligand>
</feature>
<feature type="binding site" evidence="1">
    <location>
        <begin position="184"/>
        <end position="185"/>
    </location>
    <ligand>
        <name>alpha-D-glucose 1-phosphate</name>
        <dbReference type="ChEBI" id="CHEBI:58601"/>
    </ligand>
</feature>
<feature type="binding site" evidence="1">
    <location>
        <position position="201"/>
    </location>
    <ligand>
        <name>alpha-D-glucose 1-phosphate</name>
        <dbReference type="ChEBI" id="CHEBI:58601"/>
    </ligand>
</feature>